<feature type="chain" id="PRO_0000061825" description="Cytochrome b6">
    <location>
        <begin position="1"/>
        <end position="215"/>
    </location>
</feature>
<feature type="transmembrane region" description="Helical" evidence="1">
    <location>
        <begin position="32"/>
        <end position="52"/>
    </location>
</feature>
<feature type="transmembrane region" description="Helical" evidence="1">
    <location>
        <begin position="90"/>
        <end position="110"/>
    </location>
</feature>
<feature type="transmembrane region" description="Helical" evidence="1">
    <location>
        <begin position="116"/>
        <end position="136"/>
    </location>
</feature>
<feature type="transmembrane region" description="Helical" evidence="1">
    <location>
        <begin position="186"/>
        <end position="206"/>
    </location>
</feature>
<feature type="binding site" description="covalent" evidence="1">
    <location>
        <position position="35"/>
    </location>
    <ligand>
        <name>heme c</name>
        <dbReference type="ChEBI" id="CHEBI:61717"/>
    </ligand>
</feature>
<feature type="binding site" description="axial binding residue" evidence="1">
    <location>
        <position position="86"/>
    </location>
    <ligand>
        <name>heme b</name>
        <dbReference type="ChEBI" id="CHEBI:60344"/>
        <label>2</label>
    </ligand>
    <ligandPart>
        <name>Fe</name>
        <dbReference type="ChEBI" id="CHEBI:18248"/>
    </ligandPart>
</feature>
<feature type="binding site" description="axial binding residue" evidence="1">
    <location>
        <position position="100"/>
    </location>
    <ligand>
        <name>heme b</name>
        <dbReference type="ChEBI" id="CHEBI:60344"/>
        <label>1</label>
    </ligand>
    <ligandPart>
        <name>Fe</name>
        <dbReference type="ChEBI" id="CHEBI:18248"/>
    </ligandPart>
</feature>
<feature type="binding site" description="axial binding residue" evidence="1">
    <location>
        <position position="187"/>
    </location>
    <ligand>
        <name>heme b</name>
        <dbReference type="ChEBI" id="CHEBI:60344"/>
        <label>2</label>
    </ligand>
    <ligandPart>
        <name>Fe</name>
        <dbReference type="ChEBI" id="CHEBI:18248"/>
    </ligandPart>
</feature>
<feature type="binding site" description="axial binding residue" evidence="1">
    <location>
        <position position="202"/>
    </location>
    <ligand>
        <name>heme b</name>
        <dbReference type="ChEBI" id="CHEBI:60344"/>
        <label>1</label>
    </ligand>
    <ligandPart>
        <name>Fe</name>
        <dbReference type="ChEBI" id="CHEBI:18248"/>
    </ligandPart>
</feature>
<gene>
    <name evidence="1" type="primary">petB</name>
    <name type="ordered locus">Ava_3441</name>
</gene>
<keyword id="KW-0249">Electron transport</keyword>
<keyword id="KW-0349">Heme</keyword>
<keyword id="KW-0408">Iron</keyword>
<keyword id="KW-0472">Membrane</keyword>
<keyword id="KW-0479">Metal-binding</keyword>
<keyword id="KW-0602">Photosynthesis</keyword>
<keyword id="KW-0793">Thylakoid</keyword>
<keyword id="KW-0812">Transmembrane</keyword>
<keyword id="KW-1133">Transmembrane helix</keyword>
<keyword id="KW-0813">Transport</keyword>
<accession>P0A385</accession>
<accession>Q3M7I8</accession>
<accession>Q9L3Q1</accession>
<comment type="function">
    <text evidence="1">Component of the cytochrome b6-f complex, which mediates electron transfer between photosystem II (PSII) and photosystem I (PSI), cyclic electron flow around PSI, and state transitions.</text>
</comment>
<comment type="cofactor">
    <cofactor evidence="1">
        <name>heme b</name>
        <dbReference type="ChEBI" id="CHEBI:60344"/>
    </cofactor>
    <text evidence="1">Binds 2 heme b groups non-covalently with two histidine residues as axial ligands.</text>
</comment>
<comment type="cofactor">
    <cofactor evidence="1">
        <name>heme c</name>
        <dbReference type="ChEBI" id="CHEBI:61717"/>
    </cofactor>
    <text evidence="1">Binds one heme group covalently by a single cysteine link with no axial amino acid ligand. This heme was named heme ci.</text>
</comment>
<comment type="subunit">
    <text evidence="1">The 4 large subunits of the cytochrome b6-f complex are cytochrome b6, subunit IV (17 kDa polypeptide, PetD), cytochrome f and the Rieske protein, while the 4 small subunits are PetG, PetL, PetM and PetN. The complex functions as a dimer.</text>
</comment>
<comment type="subcellular location">
    <subcellularLocation>
        <location evidence="1">Cellular thylakoid membrane</location>
        <topology evidence="1">Multi-pass membrane protein</topology>
    </subcellularLocation>
</comment>
<comment type="miscellaneous">
    <text evidence="1">Heme 1 (or BH or b566) is high-potential and absorbs at about 566 nm, and heme 2 (or BL or b562) is low-potential and absorbs at about 562 nm.</text>
</comment>
<comment type="similarity">
    <text evidence="1">Belongs to the cytochrome b family. PetB subfamily.</text>
</comment>
<proteinExistence type="inferred from homology"/>
<organism>
    <name type="scientific">Trichormus variabilis (strain ATCC 29413 / PCC 7937)</name>
    <name type="common">Anabaena variabilis</name>
    <dbReference type="NCBI Taxonomy" id="240292"/>
    <lineage>
        <taxon>Bacteria</taxon>
        <taxon>Bacillati</taxon>
        <taxon>Cyanobacteriota</taxon>
        <taxon>Cyanophyceae</taxon>
        <taxon>Nostocales</taxon>
        <taxon>Nostocaceae</taxon>
        <taxon>Trichormus</taxon>
    </lineage>
</organism>
<dbReference type="EMBL" id="AJ271818">
    <property type="protein sequence ID" value="CAB72242.1"/>
    <property type="molecule type" value="Genomic_DNA"/>
</dbReference>
<dbReference type="EMBL" id="CP000117">
    <property type="protein sequence ID" value="ABA23048.1"/>
    <property type="molecule type" value="Genomic_DNA"/>
</dbReference>
<dbReference type="RefSeq" id="WP_010997571.1">
    <property type="nucleotide sequence ID" value="NC_007413.1"/>
</dbReference>
<dbReference type="SMR" id="P0A385"/>
<dbReference type="STRING" id="240292.Ava_3441"/>
<dbReference type="GeneID" id="58726228"/>
<dbReference type="KEGG" id="ava:Ava_3441"/>
<dbReference type="eggNOG" id="COG1290">
    <property type="taxonomic scope" value="Bacteria"/>
</dbReference>
<dbReference type="HOGENOM" id="CLU_031114_0_2_3"/>
<dbReference type="Proteomes" id="UP000002533">
    <property type="component" value="Chromosome"/>
</dbReference>
<dbReference type="GO" id="GO:0031676">
    <property type="term" value="C:plasma membrane-derived thylakoid membrane"/>
    <property type="evidence" value="ECO:0007669"/>
    <property type="project" value="UniProtKB-SubCell"/>
</dbReference>
<dbReference type="GO" id="GO:0045158">
    <property type="term" value="F:electron transporter, transferring electrons within cytochrome b6/f complex of photosystem II activity"/>
    <property type="evidence" value="ECO:0007669"/>
    <property type="project" value="UniProtKB-UniRule"/>
</dbReference>
<dbReference type="GO" id="GO:0046872">
    <property type="term" value="F:metal ion binding"/>
    <property type="evidence" value="ECO:0007669"/>
    <property type="project" value="UniProtKB-KW"/>
</dbReference>
<dbReference type="GO" id="GO:0016491">
    <property type="term" value="F:oxidoreductase activity"/>
    <property type="evidence" value="ECO:0007669"/>
    <property type="project" value="InterPro"/>
</dbReference>
<dbReference type="GO" id="GO:0015979">
    <property type="term" value="P:photosynthesis"/>
    <property type="evidence" value="ECO:0007669"/>
    <property type="project" value="UniProtKB-UniRule"/>
</dbReference>
<dbReference type="GO" id="GO:0022904">
    <property type="term" value="P:respiratory electron transport chain"/>
    <property type="evidence" value="ECO:0007669"/>
    <property type="project" value="InterPro"/>
</dbReference>
<dbReference type="CDD" id="cd00284">
    <property type="entry name" value="Cytochrome_b_N"/>
    <property type="match status" value="1"/>
</dbReference>
<dbReference type="FunFam" id="1.20.810.10:FF:000001">
    <property type="entry name" value="Cytochrome b6"/>
    <property type="match status" value="1"/>
</dbReference>
<dbReference type="Gene3D" id="1.20.810.10">
    <property type="entry name" value="Cytochrome Bc1 Complex, Chain C"/>
    <property type="match status" value="1"/>
</dbReference>
<dbReference type="HAMAP" id="MF_00633">
    <property type="entry name" value="Cytb6_f_cytb6"/>
    <property type="match status" value="1"/>
</dbReference>
<dbReference type="InterPro" id="IPR005797">
    <property type="entry name" value="Cyt_b/b6_N"/>
</dbReference>
<dbReference type="InterPro" id="IPR023530">
    <property type="entry name" value="Cyt_B6_PetB"/>
</dbReference>
<dbReference type="InterPro" id="IPR027387">
    <property type="entry name" value="Cytb/b6-like_sf"/>
</dbReference>
<dbReference type="InterPro" id="IPR048259">
    <property type="entry name" value="Cytochrome_b_N_euk/bac"/>
</dbReference>
<dbReference type="InterPro" id="IPR016174">
    <property type="entry name" value="Di-haem_cyt_TM"/>
</dbReference>
<dbReference type="NCBIfam" id="NF002990">
    <property type="entry name" value="PRK03735.1"/>
    <property type="match status" value="1"/>
</dbReference>
<dbReference type="PANTHER" id="PTHR19271">
    <property type="entry name" value="CYTOCHROME B"/>
    <property type="match status" value="1"/>
</dbReference>
<dbReference type="PANTHER" id="PTHR19271:SF16">
    <property type="entry name" value="CYTOCHROME B"/>
    <property type="match status" value="1"/>
</dbReference>
<dbReference type="Pfam" id="PF00033">
    <property type="entry name" value="Cytochrome_B"/>
    <property type="match status" value="1"/>
</dbReference>
<dbReference type="PIRSF" id="PIRSF000032">
    <property type="entry name" value="Cytochrome_b6"/>
    <property type="match status" value="1"/>
</dbReference>
<dbReference type="SUPFAM" id="SSF81342">
    <property type="entry name" value="Transmembrane di-heme cytochromes"/>
    <property type="match status" value="1"/>
</dbReference>
<dbReference type="PROSITE" id="PS51002">
    <property type="entry name" value="CYTB_NTER"/>
    <property type="match status" value="1"/>
</dbReference>
<evidence type="ECO:0000255" key="1">
    <source>
        <dbReference type="HAMAP-Rule" id="MF_00633"/>
    </source>
</evidence>
<name>CYB6_TRIV2</name>
<reference key="1">
    <citation type="submission" date="2000-10" db="EMBL/GenBank/DDBJ databases">
        <title>b6f complex of Anabaena variabilis.</title>
        <authorList>
            <person name="Arnold M."/>
        </authorList>
    </citation>
    <scope>NUCLEOTIDE SEQUENCE [GENOMIC DNA]</scope>
    <source>
        <strain>FD</strain>
    </source>
</reference>
<reference key="2">
    <citation type="journal article" date="2014" name="Stand. Genomic Sci.">
        <title>Complete genome sequence of Anabaena variabilis ATCC 29413.</title>
        <authorList>
            <person name="Thiel T."/>
            <person name="Pratte B.S."/>
            <person name="Zhong J."/>
            <person name="Goodwin L."/>
            <person name="Copeland A."/>
            <person name="Lucas S."/>
            <person name="Han C."/>
            <person name="Pitluck S."/>
            <person name="Land M.L."/>
            <person name="Kyrpides N.C."/>
            <person name="Woyke T."/>
        </authorList>
    </citation>
    <scope>NUCLEOTIDE SEQUENCE [LARGE SCALE GENOMIC DNA]</scope>
    <source>
        <strain>ATCC 29413 / PCC 7937</strain>
    </source>
</reference>
<sequence>MANVYDWFEERLEIQAIAEDVTSKYVPPHVNIFYCLGGITLVCFLIQFATGFAMTFYYKPTVAEAYSSVQYIMNEVNFGWLIRSIHRWSASMMVLMMILHVFRVYLTGGFKKPRELTWVSGVILAVITVSFGVTGYSLPWDQVGYWAVKIVSGVPEAIPVVGVLISDLLRGGSSVGQATLTRYYSAHTFVLPWLIAVFMLFHFLMIRKQGISGPL</sequence>
<protein>
    <recommendedName>
        <fullName evidence="1">Cytochrome b6</fullName>
    </recommendedName>
</protein>